<dbReference type="EC" id="3.6.5.n1" evidence="1"/>
<dbReference type="EMBL" id="AM398681">
    <property type="protein sequence ID" value="CAL44298.1"/>
    <property type="molecule type" value="Genomic_DNA"/>
</dbReference>
<dbReference type="RefSeq" id="WP_011964332.1">
    <property type="nucleotide sequence ID" value="NC_009613.3"/>
</dbReference>
<dbReference type="RefSeq" id="YP_001297099.1">
    <property type="nucleotide sequence ID" value="NC_009613.3"/>
</dbReference>
<dbReference type="SMR" id="A6H1S4"/>
<dbReference type="STRING" id="402612.FP2242"/>
<dbReference type="EnsemblBacteria" id="CAL44298">
    <property type="protein sequence ID" value="CAL44298"/>
    <property type="gene ID" value="FP2242"/>
</dbReference>
<dbReference type="GeneID" id="66553345"/>
<dbReference type="KEGG" id="fps:FP2242"/>
<dbReference type="PATRIC" id="fig|402612.5.peg.2291"/>
<dbReference type="eggNOG" id="COG0481">
    <property type="taxonomic scope" value="Bacteria"/>
</dbReference>
<dbReference type="HOGENOM" id="CLU_009995_3_3_10"/>
<dbReference type="OrthoDB" id="9801591at2"/>
<dbReference type="Proteomes" id="UP000006394">
    <property type="component" value="Chromosome"/>
</dbReference>
<dbReference type="GO" id="GO:0005886">
    <property type="term" value="C:plasma membrane"/>
    <property type="evidence" value="ECO:0007669"/>
    <property type="project" value="UniProtKB-SubCell"/>
</dbReference>
<dbReference type="GO" id="GO:0005525">
    <property type="term" value="F:GTP binding"/>
    <property type="evidence" value="ECO:0007669"/>
    <property type="project" value="UniProtKB-UniRule"/>
</dbReference>
<dbReference type="GO" id="GO:0003924">
    <property type="term" value="F:GTPase activity"/>
    <property type="evidence" value="ECO:0007669"/>
    <property type="project" value="UniProtKB-UniRule"/>
</dbReference>
<dbReference type="GO" id="GO:0043022">
    <property type="term" value="F:ribosome binding"/>
    <property type="evidence" value="ECO:0007669"/>
    <property type="project" value="UniProtKB-UniRule"/>
</dbReference>
<dbReference type="GO" id="GO:0003746">
    <property type="term" value="F:translation elongation factor activity"/>
    <property type="evidence" value="ECO:0007669"/>
    <property type="project" value="UniProtKB-UniRule"/>
</dbReference>
<dbReference type="GO" id="GO:0045727">
    <property type="term" value="P:positive regulation of translation"/>
    <property type="evidence" value="ECO:0007669"/>
    <property type="project" value="UniProtKB-UniRule"/>
</dbReference>
<dbReference type="CDD" id="cd03699">
    <property type="entry name" value="EF4_II"/>
    <property type="match status" value="1"/>
</dbReference>
<dbReference type="CDD" id="cd16260">
    <property type="entry name" value="EF4_III"/>
    <property type="match status" value="1"/>
</dbReference>
<dbReference type="CDD" id="cd01890">
    <property type="entry name" value="LepA"/>
    <property type="match status" value="1"/>
</dbReference>
<dbReference type="CDD" id="cd03709">
    <property type="entry name" value="lepA_C"/>
    <property type="match status" value="1"/>
</dbReference>
<dbReference type="FunFam" id="3.40.50.300:FF:000078">
    <property type="entry name" value="Elongation factor 4"/>
    <property type="match status" value="1"/>
</dbReference>
<dbReference type="FunFam" id="2.40.30.10:FF:000015">
    <property type="entry name" value="Translation factor GUF1, mitochondrial"/>
    <property type="match status" value="1"/>
</dbReference>
<dbReference type="FunFam" id="3.30.70.240:FF:000007">
    <property type="entry name" value="Translation factor GUF1, mitochondrial"/>
    <property type="match status" value="1"/>
</dbReference>
<dbReference type="FunFam" id="3.30.70.2570:FF:000001">
    <property type="entry name" value="Translation factor GUF1, mitochondrial"/>
    <property type="match status" value="1"/>
</dbReference>
<dbReference type="FunFam" id="3.30.70.870:FF:000004">
    <property type="entry name" value="Translation factor GUF1, mitochondrial"/>
    <property type="match status" value="1"/>
</dbReference>
<dbReference type="Gene3D" id="3.30.70.240">
    <property type="match status" value="1"/>
</dbReference>
<dbReference type="Gene3D" id="3.30.70.2570">
    <property type="entry name" value="Elongation factor 4, C-terminal domain"/>
    <property type="match status" value="1"/>
</dbReference>
<dbReference type="Gene3D" id="3.30.70.870">
    <property type="entry name" value="Elongation Factor G (Translational Gtpase), domain 3"/>
    <property type="match status" value="1"/>
</dbReference>
<dbReference type="Gene3D" id="3.40.50.300">
    <property type="entry name" value="P-loop containing nucleotide triphosphate hydrolases"/>
    <property type="match status" value="1"/>
</dbReference>
<dbReference type="Gene3D" id="2.40.30.10">
    <property type="entry name" value="Translation factors"/>
    <property type="match status" value="1"/>
</dbReference>
<dbReference type="HAMAP" id="MF_00071">
    <property type="entry name" value="LepA"/>
    <property type="match status" value="1"/>
</dbReference>
<dbReference type="InterPro" id="IPR006297">
    <property type="entry name" value="EF-4"/>
</dbReference>
<dbReference type="InterPro" id="IPR035647">
    <property type="entry name" value="EFG_III/V"/>
</dbReference>
<dbReference type="InterPro" id="IPR000640">
    <property type="entry name" value="EFG_V-like"/>
</dbReference>
<dbReference type="InterPro" id="IPR004161">
    <property type="entry name" value="EFTu-like_2"/>
</dbReference>
<dbReference type="InterPro" id="IPR038363">
    <property type="entry name" value="LepA_C_sf"/>
</dbReference>
<dbReference type="InterPro" id="IPR013842">
    <property type="entry name" value="LepA_CTD"/>
</dbReference>
<dbReference type="InterPro" id="IPR035654">
    <property type="entry name" value="LepA_IV"/>
</dbReference>
<dbReference type="InterPro" id="IPR027417">
    <property type="entry name" value="P-loop_NTPase"/>
</dbReference>
<dbReference type="InterPro" id="IPR005225">
    <property type="entry name" value="Small_GTP-bd"/>
</dbReference>
<dbReference type="InterPro" id="IPR000795">
    <property type="entry name" value="T_Tr_GTP-bd_dom"/>
</dbReference>
<dbReference type="InterPro" id="IPR009000">
    <property type="entry name" value="Transl_B-barrel_sf"/>
</dbReference>
<dbReference type="NCBIfam" id="TIGR01393">
    <property type="entry name" value="lepA"/>
    <property type="match status" value="1"/>
</dbReference>
<dbReference type="NCBIfam" id="TIGR00231">
    <property type="entry name" value="small_GTP"/>
    <property type="match status" value="1"/>
</dbReference>
<dbReference type="PANTHER" id="PTHR43512:SF4">
    <property type="entry name" value="TRANSLATION FACTOR GUF1 HOMOLOG, CHLOROPLASTIC"/>
    <property type="match status" value="1"/>
</dbReference>
<dbReference type="PANTHER" id="PTHR43512">
    <property type="entry name" value="TRANSLATION FACTOR GUF1-RELATED"/>
    <property type="match status" value="1"/>
</dbReference>
<dbReference type="Pfam" id="PF00679">
    <property type="entry name" value="EFG_C"/>
    <property type="match status" value="1"/>
</dbReference>
<dbReference type="Pfam" id="PF00009">
    <property type="entry name" value="GTP_EFTU"/>
    <property type="match status" value="1"/>
</dbReference>
<dbReference type="Pfam" id="PF03144">
    <property type="entry name" value="GTP_EFTU_D2"/>
    <property type="match status" value="1"/>
</dbReference>
<dbReference type="Pfam" id="PF06421">
    <property type="entry name" value="LepA_C"/>
    <property type="match status" value="1"/>
</dbReference>
<dbReference type="PRINTS" id="PR00315">
    <property type="entry name" value="ELONGATNFCT"/>
</dbReference>
<dbReference type="SUPFAM" id="SSF54980">
    <property type="entry name" value="EF-G C-terminal domain-like"/>
    <property type="match status" value="2"/>
</dbReference>
<dbReference type="SUPFAM" id="SSF52540">
    <property type="entry name" value="P-loop containing nucleoside triphosphate hydrolases"/>
    <property type="match status" value="1"/>
</dbReference>
<dbReference type="SUPFAM" id="SSF50447">
    <property type="entry name" value="Translation proteins"/>
    <property type="match status" value="1"/>
</dbReference>
<dbReference type="PROSITE" id="PS51722">
    <property type="entry name" value="G_TR_2"/>
    <property type="match status" value="1"/>
</dbReference>
<proteinExistence type="inferred from homology"/>
<feature type="chain" id="PRO_1000031996" description="Elongation factor 4">
    <location>
        <begin position="1"/>
        <end position="598"/>
    </location>
</feature>
<feature type="domain" description="tr-type G">
    <location>
        <begin position="2"/>
        <end position="183"/>
    </location>
</feature>
<feature type="binding site" evidence="1">
    <location>
        <begin position="14"/>
        <end position="19"/>
    </location>
    <ligand>
        <name>GTP</name>
        <dbReference type="ChEBI" id="CHEBI:37565"/>
    </ligand>
</feature>
<feature type="binding site" evidence="1">
    <location>
        <begin position="130"/>
        <end position="133"/>
    </location>
    <ligand>
        <name>GTP</name>
        <dbReference type="ChEBI" id="CHEBI:37565"/>
    </ligand>
</feature>
<evidence type="ECO:0000255" key="1">
    <source>
        <dbReference type="HAMAP-Rule" id="MF_00071"/>
    </source>
</evidence>
<reference key="1">
    <citation type="journal article" date="2007" name="Nat. Biotechnol.">
        <title>Complete genome sequence of the fish pathogen Flavobacterium psychrophilum.</title>
        <authorList>
            <person name="Duchaud E."/>
            <person name="Boussaha M."/>
            <person name="Loux V."/>
            <person name="Bernardet J.-F."/>
            <person name="Michel C."/>
            <person name="Kerouault B."/>
            <person name="Mondot S."/>
            <person name="Nicolas P."/>
            <person name="Bossy R."/>
            <person name="Caron C."/>
            <person name="Bessieres P."/>
            <person name="Gibrat J.-F."/>
            <person name="Claverol S."/>
            <person name="Dumetz F."/>
            <person name="Le Henaff M."/>
            <person name="Benmansour A."/>
        </authorList>
    </citation>
    <scope>NUCLEOTIDE SEQUENCE [LARGE SCALE GENOMIC DNA]</scope>
    <source>
        <strain>ATCC 49511 / DSM 21280 / CIP 103535 / JIP02/86</strain>
    </source>
</reference>
<sequence>MKHIRNFCIIAHIDHGKSTLADRLLGATQTVTAREEKAQLLDNMDLERERGITIKSHAIQMEYTYQGQEYILNLIDTPGHVDFSYEVSRSIAACEGALLIVDAAQSIQAQTISNLYLALENDLEIIPVLNKVDLPSANPEEVSDDIIDLLGCKLEDIIHASGKTGFGVENILAAIIEKIPHPKGNIEEPLQALIFDSHYNPFRGIEVIFRVKNGQIKKGQKIKFMATGNEYFADEIGTLKLNQVPKNVISAGDVGYLISGIKEAKEVKVGDTLTDAKTPTTNMIVGFEDVKPMVFAGIYPVDTDDYEELRNSMEKLQLNDASLVFAAESSAALGFGFRCGFLGMLHMEIIQERLEREFNMTVITTVPNVSYLAYTKKEPEVGMIVNNPTDLPEPSKLDRVEEPYIKATIITKADFVGNVMGLCIEKRGVITNQTYLTTERVELNFDMPLAEIVFDFYDRLKTVSKGYASFDYSPIGMRTSKLVKLDVLLNATSVDALSALIHESNAYHIGKKMCEKLKELIPRQQFDIPIQAAIGAKIIARETIKALRKDVTAKCYGGDISRKRKLLEKQKKGKKRMRLVGNVEIPQEAFMAVLKLND</sequence>
<comment type="function">
    <text evidence="1">Required for accurate and efficient protein synthesis under certain stress conditions. May act as a fidelity factor of the translation reaction, by catalyzing a one-codon backward translocation of tRNAs on improperly translocated ribosomes. Back-translocation proceeds from a post-translocation (POST) complex to a pre-translocation (PRE) complex, thus giving elongation factor G a second chance to translocate the tRNAs correctly. Binds to ribosomes in a GTP-dependent manner.</text>
</comment>
<comment type="catalytic activity">
    <reaction evidence="1">
        <text>GTP + H2O = GDP + phosphate + H(+)</text>
        <dbReference type="Rhea" id="RHEA:19669"/>
        <dbReference type="ChEBI" id="CHEBI:15377"/>
        <dbReference type="ChEBI" id="CHEBI:15378"/>
        <dbReference type="ChEBI" id="CHEBI:37565"/>
        <dbReference type="ChEBI" id="CHEBI:43474"/>
        <dbReference type="ChEBI" id="CHEBI:58189"/>
        <dbReference type="EC" id="3.6.5.n1"/>
    </reaction>
</comment>
<comment type="subcellular location">
    <subcellularLocation>
        <location evidence="1">Cell inner membrane</location>
        <topology evidence="1">Peripheral membrane protein</topology>
        <orientation evidence="1">Cytoplasmic side</orientation>
    </subcellularLocation>
</comment>
<comment type="similarity">
    <text evidence="1">Belongs to the TRAFAC class translation factor GTPase superfamily. Classic translation factor GTPase family. LepA subfamily.</text>
</comment>
<gene>
    <name evidence="1" type="primary">lepA</name>
    <name type="ordered locus">FP2242</name>
</gene>
<organism>
    <name type="scientific">Flavobacterium psychrophilum (strain ATCC 49511 / DSM 21280 / CIP 103535 / JIP02/86)</name>
    <dbReference type="NCBI Taxonomy" id="402612"/>
    <lineage>
        <taxon>Bacteria</taxon>
        <taxon>Pseudomonadati</taxon>
        <taxon>Bacteroidota</taxon>
        <taxon>Flavobacteriia</taxon>
        <taxon>Flavobacteriales</taxon>
        <taxon>Flavobacteriaceae</taxon>
        <taxon>Flavobacterium</taxon>
    </lineage>
</organism>
<accession>A6H1S4</accession>
<protein>
    <recommendedName>
        <fullName evidence="1">Elongation factor 4</fullName>
        <shortName evidence="1">EF-4</shortName>
        <ecNumber evidence="1">3.6.5.n1</ecNumber>
    </recommendedName>
    <alternativeName>
        <fullName evidence="1">Ribosomal back-translocase LepA</fullName>
    </alternativeName>
</protein>
<name>LEPA_FLAPJ</name>
<keyword id="KW-0997">Cell inner membrane</keyword>
<keyword id="KW-1003">Cell membrane</keyword>
<keyword id="KW-0342">GTP-binding</keyword>
<keyword id="KW-0378">Hydrolase</keyword>
<keyword id="KW-0472">Membrane</keyword>
<keyword id="KW-0547">Nucleotide-binding</keyword>
<keyword id="KW-0648">Protein biosynthesis</keyword>
<keyword id="KW-1185">Reference proteome</keyword>